<evidence type="ECO:0000250" key="1"/>
<evidence type="ECO:0000255" key="2"/>
<evidence type="ECO:0000305" key="3"/>
<organism>
    <name type="scientific">Emericella nidulans (strain FGSC A4 / ATCC 38163 / CBS 112.46 / NRRL 194 / M139)</name>
    <name type="common">Aspergillus nidulans</name>
    <dbReference type="NCBI Taxonomy" id="227321"/>
    <lineage>
        <taxon>Eukaryota</taxon>
        <taxon>Fungi</taxon>
        <taxon>Dikarya</taxon>
        <taxon>Ascomycota</taxon>
        <taxon>Pezizomycotina</taxon>
        <taxon>Eurotiomycetes</taxon>
        <taxon>Eurotiomycetidae</taxon>
        <taxon>Eurotiales</taxon>
        <taxon>Aspergillaceae</taxon>
        <taxon>Aspergillus</taxon>
        <taxon>Aspergillus subgen. Nidulantes</taxon>
    </lineage>
</organism>
<protein>
    <recommendedName>
        <fullName>Probable pectin lyase C</fullName>
        <shortName>PLC</shortName>
        <ecNumber>4.2.2.10</ecNumber>
    </recommendedName>
</protein>
<reference key="1">
    <citation type="journal article" date="2005" name="Nature">
        <title>Sequencing of Aspergillus nidulans and comparative analysis with A. fumigatus and A. oryzae.</title>
        <authorList>
            <person name="Galagan J.E."/>
            <person name="Calvo S.E."/>
            <person name="Cuomo C."/>
            <person name="Ma L.-J."/>
            <person name="Wortman J.R."/>
            <person name="Batzoglou S."/>
            <person name="Lee S.-I."/>
            <person name="Bastuerkmen M."/>
            <person name="Spevak C.C."/>
            <person name="Clutterbuck J."/>
            <person name="Kapitonov V."/>
            <person name="Jurka J."/>
            <person name="Scazzocchio C."/>
            <person name="Farman M.L."/>
            <person name="Butler J."/>
            <person name="Purcell S."/>
            <person name="Harris S."/>
            <person name="Braus G.H."/>
            <person name="Draht O."/>
            <person name="Busch S."/>
            <person name="D'Enfert C."/>
            <person name="Bouchier C."/>
            <person name="Goldman G.H."/>
            <person name="Bell-Pedersen D."/>
            <person name="Griffiths-Jones S."/>
            <person name="Doonan J.H."/>
            <person name="Yu J."/>
            <person name="Vienken K."/>
            <person name="Pain A."/>
            <person name="Freitag M."/>
            <person name="Selker E.U."/>
            <person name="Archer D.B."/>
            <person name="Penalva M.A."/>
            <person name="Oakley B.R."/>
            <person name="Momany M."/>
            <person name="Tanaka T."/>
            <person name="Kumagai T."/>
            <person name="Asai K."/>
            <person name="Machida M."/>
            <person name="Nierman W.C."/>
            <person name="Denning D.W."/>
            <person name="Caddick M.X."/>
            <person name="Hynes M."/>
            <person name="Paoletti M."/>
            <person name="Fischer R."/>
            <person name="Miller B.L."/>
            <person name="Dyer P.S."/>
            <person name="Sachs M.S."/>
            <person name="Osmani S.A."/>
            <person name="Birren B.W."/>
        </authorList>
    </citation>
    <scope>NUCLEOTIDE SEQUENCE [LARGE SCALE GENOMIC DNA]</scope>
    <source>
        <strain>FGSC A4 / ATCC 38163 / CBS 112.46 / NRRL 194 / M139</strain>
    </source>
</reference>
<reference key="2">
    <citation type="journal article" date="2009" name="Fungal Genet. Biol.">
        <title>The 2008 update of the Aspergillus nidulans genome annotation: a community effort.</title>
        <authorList>
            <person name="Wortman J.R."/>
            <person name="Gilsenan J.M."/>
            <person name="Joardar V."/>
            <person name="Deegan J."/>
            <person name="Clutterbuck J."/>
            <person name="Andersen M.R."/>
            <person name="Archer D."/>
            <person name="Bencina M."/>
            <person name="Braus G."/>
            <person name="Coutinho P."/>
            <person name="von Dohren H."/>
            <person name="Doonan J."/>
            <person name="Driessen A.J."/>
            <person name="Durek P."/>
            <person name="Espeso E."/>
            <person name="Fekete E."/>
            <person name="Flipphi M."/>
            <person name="Estrada C.G."/>
            <person name="Geysens S."/>
            <person name="Goldman G."/>
            <person name="de Groot P.W."/>
            <person name="Hansen K."/>
            <person name="Harris S.D."/>
            <person name="Heinekamp T."/>
            <person name="Helmstaedt K."/>
            <person name="Henrissat B."/>
            <person name="Hofmann G."/>
            <person name="Homan T."/>
            <person name="Horio T."/>
            <person name="Horiuchi H."/>
            <person name="James S."/>
            <person name="Jones M."/>
            <person name="Karaffa L."/>
            <person name="Karanyi Z."/>
            <person name="Kato M."/>
            <person name="Keller N."/>
            <person name="Kelly D.E."/>
            <person name="Kiel J.A."/>
            <person name="Kim J.M."/>
            <person name="van der Klei I.J."/>
            <person name="Klis F.M."/>
            <person name="Kovalchuk A."/>
            <person name="Krasevec N."/>
            <person name="Kubicek C.P."/>
            <person name="Liu B."/>
            <person name="Maccabe A."/>
            <person name="Meyer V."/>
            <person name="Mirabito P."/>
            <person name="Miskei M."/>
            <person name="Mos M."/>
            <person name="Mullins J."/>
            <person name="Nelson D.R."/>
            <person name="Nielsen J."/>
            <person name="Oakley B.R."/>
            <person name="Osmani S.A."/>
            <person name="Pakula T."/>
            <person name="Paszewski A."/>
            <person name="Paulsen I."/>
            <person name="Pilsyk S."/>
            <person name="Pocsi I."/>
            <person name="Punt P.J."/>
            <person name="Ram A.F."/>
            <person name="Ren Q."/>
            <person name="Robellet X."/>
            <person name="Robson G."/>
            <person name="Seiboth B."/>
            <person name="van Solingen P."/>
            <person name="Specht T."/>
            <person name="Sun J."/>
            <person name="Taheri-Talesh N."/>
            <person name="Takeshita N."/>
            <person name="Ussery D."/>
            <person name="vanKuyk P.A."/>
            <person name="Visser H."/>
            <person name="van de Vondervoort P.J."/>
            <person name="de Vries R.P."/>
            <person name="Walton J."/>
            <person name="Xiang X."/>
            <person name="Xiong Y."/>
            <person name="Zeng A.P."/>
            <person name="Brandt B.W."/>
            <person name="Cornell M.J."/>
            <person name="van den Hondel C.A."/>
            <person name="Visser J."/>
            <person name="Oliver S.G."/>
            <person name="Turner G."/>
        </authorList>
    </citation>
    <scope>GENOME REANNOTATION</scope>
    <source>
        <strain>FGSC A4 / ATCC 38163 / CBS 112.46 / NRRL 194 / M139</strain>
    </source>
</reference>
<accession>Q5BEB9</accession>
<accession>C8VTD5</accession>
<sequence>MKKYLLSLLAAVTYTTAQSVSGSAEGFASGVTGGGGATPVYPADTAELESLLSSEGEQVIVLTKTYDFTGTSATGTACYSWGTGEGCQLILQDDCGDTPSTTVTYDAAGKTPIPVASDKTLLGVGSEGVIKGKGLSFTDNVSNIIVQNIKITELNPEYVWGGDALTFDGSSNICIDHVETSLIGRVHYVFGYNPNSGITLSNNFINGETTYSTSCDGYQYWGLELVGKNDSITFKGNYLYKTSGRSPALSGSTKFHACNNVWSDNNGHAIEGNEKGQGLFEGNVFQEVATVVSSTFWEAGDLFLSSADGTGNDACASYIGRNCASSIYMNDGGDYTSYTDVSWLGDWSGLTIAECAEAREIEGTVPTSAGNTL</sequence>
<dbReference type="EC" id="4.2.2.10"/>
<dbReference type="EMBL" id="AACD01000016">
    <property type="protein sequence ID" value="EAA66229.1"/>
    <property type="status" value="ALT_SEQ"/>
    <property type="molecule type" value="Genomic_DNA"/>
</dbReference>
<dbReference type="EMBL" id="BN001308">
    <property type="protein sequence ID" value="CBF88117.1"/>
    <property type="status" value="ALT_INIT"/>
    <property type="molecule type" value="Genomic_DNA"/>
</dbReference>
<dbReference type="RefSeq" id="XP_658715.1">
    <property type="nucleotide sequence ID" value="XM_653623.1"/>
</dbReference>
<dbReference type="SMR" id="Q5BEB9"/>
<dbReference type="STRING" id="227321.Q5BEB9"/>
<dbReference type="CAZy" id="PL1">
    <property type="family name" value="Polysaccharide Lyase Family 1"/>
</dbReference>
<dbReference type="GlyCosmos" id="Q5BEB9">
    <property type="glycosylation" value="2 sites, No reported glycans"/>
</dbReference>
<dbReference type="KEGG" id="ani:ANIA_10167"/>
<dbReference type="eggNOG" id="ENOG502QXM6">
    <property type="taxonomic scope" value="Eukaryota"/>
</dbReference>
<dbReference type="HOGENOM" id="CLU_272248_0_0_1"/>
<dbReference type="InParanoid" id="Q5BEB9"/>
<dbReference type="OrthoDB" id="66881at2759"/>
<dbReference type="Proteomes" id="UP000000560">
    <property type="component" value="Chromosome VIII"/>
</dbReference>
<dbReference type="GO" id="GO:0005576">
    <property type="term" value="C:extracellular region"/>
    <property type="evidence" value="ECO:0007669"/>
    <property type="project" value="UniProtKB-SubCell"/>
</dbReference>
<dbReference type="GO" id="GO:0030570">
    <property type="term" value="F:pectate lyase activity"/>
    <property type="evidence" value="ECO:0007669"/>
    <property type="project" value="InterPro"/>
</dbReference>
<dbReference type="GO" id="GO:0047490">
    <property type="term" value="F:pectin lyase activity"/>
    <property type="evidence" value="ECO:0000250"/>
    <property type="project" value="UniProtKB"/>
</dbReference>
<dbReference type="GO" id="GO:0071555">
    <property type="term" value="P:cell wall organization"/>
    <property type="evidence" value="ECO:0007669"/>
    <property type="project" value="UniProtKB-KW"/>
</dbReference>
<dbReference type="GO" id="GO:0045490">
    <property type="term" value="P:pectin catabolic process"/>
    <property type="evidence" value="ECO:0000250"/>
    <property type="project" value="UniProtKB"/>
</dbReference>
<dbReference type="FunFam" id="2.160.20.10:FF:000003">
    <property type="entry name" value="Pectin lyase F"/>
    <property type="match status" value="1"/>
</dbReference>
<dbReference type="Gene3D" id="2.160.20.10">
    <property type="entry name" value="Single-stranded right-handed beta-helix, Pectin lyase-like"/>
    <property type="match status" value="1"/>
</dbReference>
<dbReference type="InterPro" id="IPR002022">
    <property type="entry name" value="Pec_lyase"/>
</dbReference>
<dbReference type="InterPro" id="IPR012334">
    <property type="entry name" value="Pectin_lyas_fold"/>
</dbReference>
<dbReference type="InterPro" id="IPR011050">
    <property type="entry name" value="Pectin_lyase_fold/virulence"/>
</dbReference>
<dbReference type="InterPro" id="IPR045032">
    <property type="entry name" value="PEL"/>
</dbReference>
<dbReference type="PANTHER" id="PTHR31683">
    <property type="entry name" value="PECTATE LYASE 18-RELATED"/>
    <property type="match status" value="1"/>
</dbReference>
<dbReference type="PANTHER" id="PTHR31683:SF16">
    <property type="entry name" value="PECTIN LYASE A-RELATED"/>
    <property type="match status" value="1"/>
</dbReference>
<dbReference type="Pfam" id="PF00544">
    <property type="entry name" value="Pectate_lyase_4"/>
    <property type="match status" value="1"/>
</dbReference>
<dbReference type="SMART" id="SM00656">
    <property type="entry name" value="Amb_all"/>
    <property type="match status" value="1"/>
</dbReference>
<dbReference type="SUPFAM" id="SSF51126">
    <property type="entry name" value="Pectin lyase-like"/>
    <property type="match status" value="1"/>
</dbReference>
<comment type="function">
    <text evidence="1">Pectinolytic enzymes consist of four classes of enzymes: pectin lyase, polygalacturonase, pectin methylesterase and rhamnogalacturonase. Among pectinolytic enzymes, pectin lyase is the most important in depolymerization of pectin, since it cleaves internal glycosidic bonds of highly methylated pectins (By similarity).</text>
</comment>
<comment type="catalytic activity">
    <reaction>
        <text>Eliminative cleavage of (1-&gt;4)-alpha-D-galacturonan methyl ester to give oligosaccharides with 4-deoxy-6-O-methyl-alpha-D-galact-4-enuronosyl groups at their non-reducing ends.</text>
        <dbReference type="EC" id="4.2.2.10"/>
    </reaction>
</comment>
<comment type="subcellular location">
    <subcellularLocation>
        <location evidence="1">Secreted</location>
    </subcellularLocation>
</comment>
<comment type="similarity">
    <text evidence="3">Belongs to the polysaccharide lyase 1 family.</text>
</comment>
<comment type="sequence caution" evidence="3">
    <conflict type="erroneous initiation">
        <sequence resource="EMBL-CDS" id="CBF88117"/>
    </conflict>
    <text>Extended N-terminus.</text>
</comment>
<comment type="sequence caution" evidence="3">
    <conflict type="erroneous gene model prediction">
        <sequence resource="EMBL-CDS" id="EAA66229"/>
    </conflict>
</comment>
<name>PELC_EMENI</name>
<gene>
    <name type="primary">pelC</name>
    <name type="ORF">AN1111</name>
</gene>
<keyword id="KW-0119">Carbohydrate metabolism</keyword>
<keyword id="KW-0961">Cell wall biogenesis/degradation</keyword>
<keyword id="KW-1015">Disulfide bond</keyword>
<keyword id="KW-0325">Glycoprotein</keyword>
<keyword id="KW-0456">Lyase</keyword>
<keyword id="KW-0624">Polysaccharide degradation</keyword>
<keyword id="KW-1185">Reference proteome</keyword>
<keyword id="KW-0964">Secreted</keyword>
<keyword id="KW-0732">Signal</keyword>
<feature type="signal peptide" evidence="2">
    <location>
        <begin position="1"/>
        <end position="17"/>
    </location>
</feature>
<feature type="chain" id="PRO_0000394351" description="Probable pectin lyase C">
    <location>
        <begin position="18"/>
        <end position="373"/>
    </location>
</feature>
<feature type="active site" evidence="2">
    <location>
        <position position="245"/>
    </location>
</feature>
<feature type="glycosylation site" description="N-linked (GlcNAc...) asparagine" evidence="2">
    <location>
        <position position="140"/>
    </location>
</feature>
<feature type="glycosylation site" description="N-linked (GlcNAc...) asparagine" evidence="2">
    <location>
        <position position="229"/>
    </location>
</feature>
<feature type="disulfide bond" evidence="1">
    <location>
        <begin position="78"/>
        <end position="95"/>
    </location>
</feature>
<feature type="disulfide bond" evidence="1">
    <location>
        <begin position="87"/>
        <end position="215"/>
    </location>
</feature>
<feature type="disulfide bond" evidence="1">
    <location>
        <begin position="315"/>
        <end position="323"/>
    </location>
</feature>
<proteinExistence type="inferred from homology"/>